<accession>A3MV67</accession>
<sequence>MVVVAISGQPGSGKTTVAREVARVLKLPMVSSGSIFRELAAKYGMDLLEFHKYAEQNTEIDKIVDSIALEKAKAGNVVLEGHLTAWIVRPYADVCIYLKASKEVRARRVAMRDGVSFDAALREIEERERLNKKRYLAIYEIDIDNLSIFDLVLDTSYLSINDTVRISLDFICTSLNSKYMKNFC</sequence>
<name>KCY_PYRCJ</name>
<comment type="catalytic activity">
    <reaction evidence="1">
        <text>CMP + ATP = CDP + ADP</text>
        <dbReference type="Rhea" id="RHEA:11600"/>
        <dbReference type="ChEBI" id="CHEBI:30616"/>
        <dbReference type="ChEBI" id="CHEBI:58069"/>
        <dbReference type="ChEBI" id="CHEBI:60377"/>
        <dbReference type="ChEBI" id="CHEBI:456216"/>
        <dbReference type="EC" id="2.7.4.25"/>
    </reaction>
</comment>
<comment type="catalytic activity">
    <reaction evidence="1">
        <text>dCMP + ATP = dCDP + ADP</text>
        <dbReference type="Rhea" id="RHEA:25094"/>
        <dbReference type="ChEBI" id="CHEBI:30616"/>
        <dbReference type="ChEBI" id="CHEBI:57566"/>
        <dbReference type="ChEBI" id="CHEBI:58593"/>
        <dbReference type="ChEBI" id="CHEBI:456216"/>
        <dbReference type="EC" id="2.7.4.25"/>
    </reaction>
</comment>
<comment type="subcellular location">
    <subcellularLocation>
        <location evidence="1">Cytoplasm</location>
    </subcellularLocation>
</comment>
<comment type="similarity">
    <text evidence="1">Belongs to the cytidylate kinase family. Type 2 subfamily.</text>
</comment>
<proteinExistence type="inferred from homology"/>
<protein>
    <recommendedName>
        <fullName evidence="1">Cytidylate kinase</fullName>
        <shortName evidence="1">CK</shortName>
        <ecNumber evidence="1">2.7.4.25</ecNumber>
    </recommendedName>
    <alternativeName>
        <fullName evidence="1">Cytidine monophosphate kinase</fullName>
        <shortName evidence="1">CMP kinase</shortName>
    </alternativeName>
</protein>
<gene>
    <name evidence="1" type="primary">cmk</name>
    <name type="ordered locus">Pcal_1109</name>
</gene>
<organism>
    <name type="scientific">Pyrobaculum calidifontis (strain DSM 21063 / JCM 11548 / VA1)</name>
    <dbReference type="NCBI Taxonomy" id="410359"/>
    <lineage>
        <taxon>Archaea</taxon>
        <taxon>Thermoproteota</taxon>
        <taxon>Thermoprotei</taxon>
        <taxon>Thermoproteales</taxon>
        <taxon>Thermoproteaceae</taxon>
        <taxon>Pyrobaculum</taxon>
    </lineage>
</organism>
<reference key="1">
    <citation type="submission" date="2007-02" db="EMBL/GenBank/DDBJ databases">
        <title>Complete sequence of Pyrobaculum calidifontis JCM 11548.</title>
        <authorList>
            <consortium name="US DOE Joint Genome Institute"/>
            <person name="Copeland A."/>
            <person name="Lucas S."/>
            <person name="Lapidus A."/>
            <person name="Barry K."/>
            <person name="Glavina del Rio T."/>
            <person name="Dalin E."/>
            <person name="Tice H."/>
            <person name="Pitluck S."/>
            <person name="Chain P."/>
            <person name="Malfatti S."/>
            <person name="Shin M."/>
            <person name="Vergez L."/>
            <person name="Schmutz J."/>
            <person name="Larimer F."/>
            <person name="Land M."/>
            <person name="Hauser L."/>
            <person name="Kyrpides N."/>
            <person name="Mikhailova N."/>
            <person name="Cozen A.E."/>
            <person name="Fitz-Gibbon S.T."/>
            <person name="House C.H."/>
            <person name="Saltikov C."/>
            <person name="Lowe T.M."/>
            <person name="Richardson P."/>
        </authorList>
    </citation>
    <scope>NUCLEOTIDE SEQUENCE [LARGE SCALE GENOMIC DNA]</scope>
    <source>
        <strain>DSM 21063 / JCM 11548 / VA1</strain>
    </source>
</reference>
<keyword id="KW-0067">ATP-binding</keyword>
<keyword id="KW-0963">Cytoplasm</keyword>
<keyword id="KW-0418">Kinase</keyword>
<keyword id="KW-0547">Nucleotide-binding</keyword>
<keyword id="KW-0808">Transferase</keyword>
<dbReference type="EC" id="2.7.4.25" evidence="1"/>
<dbReference type="EMBL" id="CP000561">
    <property type="protein sequence ID" value="ABO08534.1"/>
    <property type="molecule type" value="Genomic_DNA"/>
</dbReference>
<dbReference type="RefSeq" id="WP_011849792.1">
    <property type="nucleotide sequence ID" value="NC_009073.1"/>
</dbReference>
<dbReference type="SMR" id="A3MV67"/>
<dbReference type="STRING" id="410359.Pcal_1109"/>
<dbReference type="GeneID" id="4910060"/>
<dbReference type="KEGG" id="pcl:Pcal_1109"/>
<dbReference type="eggNOG" id="arCOG01037">
    <property type="taxonomic scope" value="Archaea"/>
</dbReference>
<dbReference type="HOGENOM" id="CLU_079959_1_0_2"/>
<dbReference type="OrthoDB" id="31096at2157"/>
<dbReference type="Proteomes" id="UP000001431">
    <property type="component" value="Chromosome"/>
</dbReference>
<dbReference type="GO" id="GO:0005737">
    <property type="term" value="C:cytoplasm"/>
    <property type="evidence" value="ECO:0007669"/>
    <property type="project" value="UniProtKB-SubCell"/>
</dbReference>
<dbReference type="GO" id="GO:0005524">
    <property type="term" value="F:ATP binding"/>
    <property type="evidence" value="ECO:0007669"/>
    <property type="project" value="UniProtKB-UniRule"/>
</dbReference>
<dbReference type="GO" id="GO:0036430">
    <property type="term" value="F:CMP kinase activity"/>
    <property type="evidence" value="ECO:0007669"/>
    <property type="project" value="RHEA"/>
</dbReference>
<dbReference type="GO" id="GO:0036431">
    <property type="term" value="F:dCMP kinase activity"/>
    <property type="evidence" value="ECO:0007669"/>
    <property type="project" value="RHEA"/>
</dbReference>
<dbReference type="GO" id="GO:0006220">
    <property type="term" value="P:pyrimidine nucleotide metabolic process"/>
    <property type="evidence" value="ECO:0007669"/>
    <property type="project" value="UniProtKB-UniRule"/>
</dbReference>
<dbReference type="CDD" id="cd02020">
    <property type="entry name" value="CMPK"/>
    <property type="match status" value="1"/>
</dbReference>
<dbReference type="Gene3D" id="3.40.50.300">
    <property type="entry name" value="P-loop containing nucleotide triphosphate hydrolases"/>
    <property type="match status" value="1"/>
</dbReference>
<dbReference type="HAMAP" id="MF_00239">
    <property type="entry name" value="Cytidyl_kinase_type2"/>
    <property type="match status" value="1"/>
</dbReference>
<dbReference type="InterPro" id="IPR011892">
    <property type="entry name" value="Cyt_kin_arch"/>
</dbReference>
<dbReference type="InterPro" id="IPR011994">
    <property type="entry name" value="Cytidylate_kinase_dom"/>
</dbReference>
<dbReference type="InterPro" id="IPR027417">
    <property type="entry name" value="P-loop_NTPase"/>
</dbReference>
<dbReference type="NCBIfam" id="TIGR02173">
    <property type="entry name" value="cyt_kin_arch"/>
    <property type="match status" value="1"/>
</dbReference>
<dbReference type="Pfam" id="PF13189">
    <property type="entry name" value="Cytidylate_kin2"/>
    <property type="match status" value="1"/>
</dbReference>
<dbReference type="SUPFAM" id="SSF52540">
    <property type="entry name" value="P-loop containing nucleoside triphosphate hydrolases"/>
    <property type="match status" value="1"/>
</dbReference>
<feature type="chain" id="PRO_1000005684" description="Cytidylate kinase">
    <location>
        <begin position="1"/>
        <end position="184"/>
    </location>
</feature>
<feature type="binding site" evidence="1">
    <location>
        <begin position="8"/>
        <end position="16"/>
    </location>
    <ligand>
        <name>ATP</name>
        <dbReference type="ChEBI" id="CHEBI:30616"/>
    </ligand>
</feature>
<evidence type="ECO:0000255" key="1">
    <source>
        <dbReference type="HAMAP-Rule" id="MF_00239"/>
    </source>
</evidence>